<gene>
    <name type="primary">mdoH</name>
    <name type="synonym">opgH</name>
    <name type="ordered locus">SF1045</name>
    <name type="ordered locus">S1119</name>
</gene>
<keyword id="KW-0997">Cell inner membrane</keyword>
<keyword id="KW-1003">Cell membrane</keyword>
<keyword id="KW-0328">Glycosyltransferase</keyword>
<keyword id="KW-0472">Membrane</keyword>
<keyword id="KW-1185">Reference proteome</keyword>
<keyword id="KW-0808">Transferase</keyword>
<keyword id="KW-0812">Transmembrane</keyword>
<keyword id="KW-1133">Transmembrane helix</keyword>
<proteinExistence type="inferred from homology"/>
<reference key="1">
    <citation type="journal article" date="2002" name="Nucleic Acids Res.">
        <title>Genome sequence of Shigella flexneri 2a: insights into pathogenicity through comparison with genomes of Escherichia coli K12 and O157.</title>
        <authorList>
            <person name="Jin Q."/>
            <person name="Yuan Z."/>
            <person name="Xu J."/>
            <person name="Wang Y."/>
            <person name="Shen Y."/>
            <person name="Lu W."/>
            <person name="Wang J."/>
            <person name="Liu H."/>
            <person name="Yang J."/>
            <person name="Yang F."/>
            <person name="Zhang X."/>
            <person name="Zhang J."/>
            <person name="Yang G."/>
            <person name="Wu H."/>
            <person name="Qu D."/>
            <person name="Dong J."/>
            <person name="Sun L."/>
            <person name="Xue Y."/>
            <person name="Zhao A."/>
            <person name="Gao Y."/>
            <person name="Zhu J."/>
            <person name="Kan B."/>
            <person name="Ding K."/>
            <person name="Chen S."/>
            <person name="Cheng H."/>
            <person name="Yao Z."/>
            <person name="He B."/>
            <person name="Chen R."/>
            <person name="Ma D."/>
            <person name="Qiang B."/>
            <person name="Wen Y."/>
            <person name="Hou Y."/>
            <person name="Yu J."/>
        </authorList>
    </citation>
    <scope>NUCLEOTIDE SEQUENCE [LARGE SCALE GENOMIC DNA]</scope>
    <source>
        <strain>301 / Serotype 2a</strain>
    </source>
</reference>
<reference key="2">
    <citation type="journal article" date="2003" name="Infect. Immun.">
        <title>Complete genome sequence and comparative genomics of Shigella flexneri serotype 2a strain 2457T.</title>
        <authorList>
            <person name="Wei J."/>
            <person name="Goldberg M.B."/>
            <person name="Burland V."/>
            <person name="Venkatesan M.M."/>
            <person name="Deng W."/>
            <person name="Fournier G."/>
            <person name="Mayhew G.F."/>
            <person name="Plunkett G. III"/>
            <person name="Rose D.J."/>
            <person name="Darling A."/>
            <person name="Mau B."/>
            <person name="Perna N.T."/>
            <person name="Payne S.M."/>
            <person name="Runyen-Janecky L.J."/>
            <person name="Zhou S."/>
            <person name="Schwartz D.C."/>
            <person name="Blattner F.R."/>
        </authorList>
    </citation>
    <scope>NUCLEOTIDE SEQUENCE [LARGE SCALE GENOMIC DNA]</scope>
    <source>
        <strain>ATCC 700930 / 2457T / Serotype 2a</strain>
    </source>
</reference>
<name>OPGH_SHIFL</name>
<dbReference type="EC" id="2.4.1.-"/>
<dbReference type="EMBL" id="AE005674">
    <property type="protein sequence ID" value="AAN42667.2"/>
    <property type="molecule type" value="Genomic_DNA"/>
</dbReference>
<dbReference type="EMBL" id="AE014073">
    <property type="protein sequence ID" value="AAP16551.1"/>
    <property type="molecule type" value="Genomic_DNA"/>
</dbReference>
<dbReference type="RefSeq" id="NP_706960.2">
    <property type="nucleotide sequence ID" value="NC_004337.2"/>
</dbReference>
<dbReference type="RefSeq" id="WP_001295445.1">
    <property type="nucleotide sequence ID" value="NZ_WPGW01000143.1"/>
</dbReference>
<dbReference type="STRING" id="198214.SF1045"/>
<dbReference type="PaxDb" id="198214-SF1045"/>
<dbReference type="GeneID" id="1023984"/>
<dbReference type="GeneID" id="93776365"/>
<dbReference type="KEGG" id="sfl:SF1045"/>
<dbReference type="KEGG" id="sfx:S1119"/>
<dbReference type="PATRIC" id="fig|198214.7.peg.1219"/>
<dbReference type="HOGENOM" id="CLU_015730_1_0_6"/>
<dbReference type="UniPathway" id="UPA00637"/>
<dbReference type="Proteomes" id="UP000001006">
    <property type="component" value="Chromosome"/>
</dbReference>
<dbReference type="Proteomes" id="UP000002673">
    <property type="component" value="Chromosome"/>
</dbReference>
<dbReference type="GO" id="GO:0005886">
    <property type="term" value="C:plasma membrane"/>
    <property type="evidence" value="ECO:0007669"/>
    <property type="project" value="UniProtKB-SubCell"/>
</dbReference>
<dbReference type="GO" id="GO:0016758">
    <property type="term" value="F:hexosyltransferase activity"/>
    <property type="evidence" value="ECO:0007669"/>
    <property type="project" value="UniProtKB-UniRule"/>
</dbReference>
<dbReference type="GO" id="GO:0009250">
    <property type="term" value="P:glucan biosynthetic process"/>
    <property type="evidence" value="ECO:0007669"/>
    <property type="project" value="UniProtKB-UniRule"/>
</dbReference>
<dbReference type="CDD" id="cd04191">
    <property type="entry name" value="Glucan_BSP_MdoH"/>
    <property type="match status" value="1"/>
</dbReference>
<dbReference type="FunFam" id="3.90.550.10:FF:000047">
    <property type="entry name" value="Glucans biosynthesis glucosyltransferase H"/>
    <property type="match status" value="1"/>
</dbReference>
<dbReference type="Gene3D" id="3.90.550.10">
    <property type="entry name" value="Spore Coat Polysaccharide Biosynthesis Protein SpsA, Chain A"/>
    <property type="match status" value="1"/>
</dbReference>
<dbReference type="HAMAP" id="MF_01072">
    <property type="entry name" value="MdoH_OpgH"/>
    <property type="match status" value="1"/>
</dbReference>
<dbReference type="InterPro" id="IPR023725">
    <property type="entry name" value="Glucans_biosynth_gluTrFase_H"/>
</dbReference>
<dbReference type="InterPro" id="IPR001173">
    <property type="entry name" value="Glyco_trans_2-like"/>
</dbReference>
<dbReference type="InterPro" id="IPR050321">
    <property type="entry name" value="Glycosyltr_2/OpgH_subfam"/>
</dbReference>
<dbReference type="InterPro" id="IPR029044">
    <property type="entry name" value="Nucleotide-diphossugar_trans"/>
</dbReference>
<dbReference type="NCBIfam" id="NF003955">
    <property type="entry name" value="PRK05454.1-1"/>
    <property type="match status" value="1"/>
</dbReference>
<dbReference type="NCBIfam" id="NF003958">
    <property type="entry name" value="PRK05454.2-1"/>
    <property type="match status" value="1"/>
</dbReference>
<dbReference type="NCBIfam" id="NF003962">
    <property type="entry name" value="PRK05454.2-5"/>
    <property type="match status" value="1"/>
</dbReference>
<dbReference type="PANTHER" id="PTHR43867">
    <property type="entry name" value="CELLULOSE SYNTHASE CATALYTIC SUBUNIT A [UDP-FORMING]"/>
    <property type="match status" value="1"/>
</dbReference>
<dbReference type="PANTHER" id="PTHR43867:SF5">
    <property type="entry name" value="GLUCANS BIOSYNTHESIS GLUCOSYLTRANSFERASE H"/>
    <property type="match status" value="1"/>
</dbReference>
<dbReference type="Pfam" id="PF00535">
    <property type="entry name" value="Glycos_transf_2"/>
    <property type="match status" value="1"/>
</dbReference>
<dbReference type="SUPFAM" id="SSF53448">
    <property type="entry name" value="Nucleotide-diphospho-sugar transferases"/>
    <property type="match status" value="1"/>
</dbReference>
<sequence length="847" mass="96937">MNKTTEYIDAMPIAASEKAALPKTDIRAVHQALDAEHRTWAREDDSPQGSVKARLEQAWPDSLADGQLIKDDEGRDQLKAMPEAKRSSMFPDPWRTNPVGRFWDRLRGRDVTPRYLARLTKEEQESEQKWRTVGTIRRYILLILTLAQTVVATWYMKTILPYQGWALINPMDMVGQDLWVSFMQLLPYMLQTGILILFAVLFCWVSAGFWTALMGFLQLLIGRDKYSISASTVGDEPLNPEHRTALIMPICNEDVNRVFAGLRATWESVKATGNAKHFDVYILSDSYNPDICVAEQKAWMELIAEVGGEGQIFYRRRRRRVKRKSGNIDDFCRRWGSQYSYMVVLDADSVMTGDCLCGLVRLMEANPNAGIIQSSPKASGMDTLYARCQQFATRVYGPLFTAGLHFWQLGESHYWGHNAIIRVKPFIEHCALAPLPGEGSFAGSILSHDFVEAALMRRAGWGVWIAYDLPGSYEELPPNLLDELKRDRRWCHGNLMNFRLFLVKGMHPVHRAVFLTGVMSYLSAPLWFMFLALSTALQVVHALTEPQYFLQPRQLFPVWPQWRPELAIALFASTMVLLFLPKLLSILLIWCKGTKEYGGFWRVTLSLLLEVLFSVLLAPVRMLFHTVFVVSAFLGWEVVWNSPQRDDDSTSWGEAFKRHGSQLLLGLVWAVGMAWLDLRFLFWLAPIVFSLILSPFVSVISSRATVGLRTKRWKLFLIPEEYSPPQVLVDTDRFLEMNRQRSLDDGFMHAVFNPSFNALATAMATARHRASKVLEIARDRHVEQALNETPEKLNRDRRLVLLSDPVTMARLHFRVWNSPERYSSWVSYYEGIKLNPLALRKPDAASQ</sequence>
<accession>P62519</accession>
<accession>P33137</accession>
<accession>P77371</accession>
<evidence type="ECO:0000250" key="1"/>
<evidence type="ECO:0000255" key="2"/>
<evidence type="ECO:0000305" key="3"/>
<protein>
    <recommendedName>
        <fullName>Glucans biosynthesis glucosyltransferase H</fullName>
        <ecNumber>2.4.1.-</ecNumber>
    </recommendedName>
</protein>
<feature type="chain" id="PRO_0000210364" description="Glucans biosynthesis glucosyltransferase H">
    <location>
        <begin position="1"/>
        <end position="847"/>
    </location>
</feature>
<feature type="topological domain" description="Cytoplasmic" evidence="2">
    <location>
        <begin position="1"/>
        <end position="139"/>
    </location>
</feature>
<feature type="transmembrane region" description="Helical" evidence="2">
    <location>
        <begin position="140"/>
        <end position="160"/>
    </location>
</feature>
<feature type="topological domain" description="Periplasmic" evidence="2">
    <location>
        <begin position="161"/>
        <end position="193"/>
    </location>
</feature>
<feature type="transmembrane region" description="Helical" evidence="2">
    <location>
        <begin position="194"/>
        <end position="214"/>
    </location>
</feature>
<feature type="topological domain" description="Cytoplasmic" evidence="2">
    <location>
        <begin position="215"/>
        <end position="512"/>
    </location>
</feature>
<feature type="transmembrane region" description="Helical" evidence="2">
    <location>
        <begin position="513"/>
        <end position="533"/>
    </location>
</feature>
<feature type="topological domain" description="Periplasmic" evidence="2">
    <location>
        <begin position="534"/>
        <end position="569"/>
    </location>
</feature>
<feature type="transmembrane region" description="Helical" evidence="2">
    <location>
        <begin position="570"/>
        <end position="590"/>
    </location>
</feature>
<feature type="topological domain" description="Cytoplasmic" evidence="2">
    <location>
        <begin position="591"/>
        <end position="602"/>
    </location>
</feature>
<feature type="transmembrane region" description="Helical" evidence="2">
    <location>
        <begin position="603"/>
        <end position="625"/>
    </location>
</feature>
<feature type="topological domain" description="Periplasmic" evidence="2">
    <location>
        <begin position="626"/>
        <end position="679"/>
    </location>
</feature>
<feature type="transmembrane region" description="Helical" evidence="2">
    <location>
        <begin position="680"/>
        <end position="700"/>
    </location>
</feature>
<feature type="topological domain" description="Cytoplasmic" evidence="2">
    <location>
        <begin position="701"/>
        <end position="847"/>
    </location>
</feature>
<comment type="function">
    <text evidence="1">Involved in the biosynthesis of osmoregulated periplasmic glucans (OPGs).</text>
</comment>
<comment type="pathway">
    <text>Glycan metabolism; osmoregulated periplasmic glucan (OPG) biosynthesis.</text>
</comment>
<comment type="subcellular location">
    <subcellularLocation>
        <location evidence="1">Cell inner membrane</location>
        <topology evidence="1">Multi-pass membrane protein</topology>
    </subcellularLocation>
</comment>
<comment type="similarity">
    <text evidence="3">Belongs to the glycosyltransferase 2 family. OpgH subfamily.</text>
</comment>
<organism>
    <name type="scientific">Shigella flexneri</name>
    <dbReference type="NCBI Taxonomy" id="623"/>
    <lineage>
        <taxon>Bacteria</taxon>
        <taxon>Pseudomonadati</taxon>
        <taxon>Pseudomonadota</taxon>
        <taxon>Gammaproteobacteria</taxon>
        <taxon>Enterobacterales</taxon>
        <taxon>Enterobacteriaceae</taxon>
        <taxon>Shigella</taxon>
    </lineage>
</organism>